<organism>
    <name type="scientific">Rickettsia felis (strain ATCC VR-1525 / URRWXCal2)</name>
    <name type="common">Rickettsia azadi</name>
    <dbReference type="NCBI Taxonomy" id="315456"/>
    <lineage>
        <taxon>Bacteria</taxon>
        <taxon>Pseudomonadati</taxon>
        <taxon>Pseudomonadota</taxon>
        <taxon>Alphaproteobacteria</taxon>
        <taxon>Rickettsiales</taxon>
        <taxon>Rickettsiaceae</taxon>
        <taxon>Rickettsieae</taxon>
        <taxon>Rickettsia</taxon>
        <taxon>spotted fever group</taxon>
    </lineage>
</organism>
<keyword id="KW-0003">3Fe-4S</keyword>
<keyword id="KW-0004">4Fe-4S</keyword>
<keyword id="KW-0249">Electron transport</keyword>
<keyword id="KW-0408">Iron</keyword>
<keyword id="KW-0411">Iron-sulfur</keyword>
<keyword id="KW-0479">Metal-binding</keyword>
<keyword id="KW-0677">Repeat</keyword>
<keyword id="KW-0813">Transport</keyword>
<evidence type="ECO:0000250" key="1"/>
<evidence type="ECO:0000255" key="2">
    <source>
        <dbReference type="PROSITE-ProRule" id="PRU00711"/>
    </source>
</evidence>
<comment type="function">
    <text evidence="1">Ferredoxins are iron-sulfur proteins that transfer electrons in a wide variety of metabolic reactions.</text>
</comment>
<comment type="cofactor">
    <cofactor evidence="1">
        <name>[4Fe-4S] cluster</name>
        <dbReference type="ChEBI" id="CHEBI:49883"/>
    </cofactor>
    <text evidence="1">Binds 1 [4Fe-4S] cluster.</text>
</comment>
<comment type="cofactor">
    <cofactor evidence="1">
        <name>[3Fe-4S] cluster</name>
        <dbReference type="ChEBI" id="CHEBI:21137"/>
    </cofactor>
    <text evidence="1">Binds 1 [3Fe-4S] cluster.</text>
</comment>
<protein>
    <recommendedName>
        <fullName>Ferredoxin</fullName>
    </recommendedName>
</protein>
<dbReference type="EMBL" id="CP000053">
    <property type="protein sequence ID" value="AAY62166.1"/>
    <property type="molecule type" value="Genomic_DNA"/>
</dbReference>
<dbReference type="SMR" id="Q4UJX3"/>
<dbReference type="STRING" id="315456.RF_1315"/>
<dbReference type="KEGG" id="rfe:RF_1315"/>
<dbReference type="eggNOG" id="COG1146">
    <property type="taxonomic scope" value="Bacteria"/>
</dbReference>
<dbReference type="HOGENOM" id="CLU_139698_0_0_5"/>
<dbReference type="OrthoDB" id="9803397at2"/>
<dbReference type="Proteomes" id="UP000008548">
    <property type="component" value="Chromosome"/>
</dbReference>
<dbReference type="GO" id="GO:0051538">
    <property type="term" value="F:3 iron, 4 sulfur cluster binding"/>
    <property type="evidence" value="ECO:0007669"/>
    <property type="project" value="UniProtKB-KW"/>
</dbReference>
<dbReference type="GO" id="GO:0051539">
    <property type="term" value="F:4 iron, 4 sulfur cluster binding"/>
    <property type="evidence" value="ECO:0007669"/>
    <property type="project" value="UniProtKB-KW"/>
</dbReference>
<dbReference type="GO" id="GO:0009055">
    <property type="term" value="F:electron transfer activity"/>
    <property type="evidence" value="ECO:0007669"/>
    <property type="project" value="InterPro"/>
</dbReference>
<dbReference type="GO" id="GO:0046872">
    <property type="term" value="F:metal ion binding"/>
    <property type="evidence" value="ECO:0007669"/>
    <property type="project" value="UniProtKB-KW"/>
</dbReference>
<dbReference type="Gene3D" id="3.30.70.20">
    <property type="match status" value="1"/>
</dbReference>
<dbReference type="InterPro" id="IPR017896">
    <property type="entry name" value="4Fe4S_Fe-S-bd"/>
</dbReference>
<dbReference type="InterPro" id="IPR017900">
    <property type="entry name" value="4Fe4S_Fe_S_CS"/>
</dbReference>
<dbReference type="InterPro" id="IPR000813">
    <property type="entry name" value="7Fe_ferredoxin"/>
</dbReference>
<dbReference type="InterPro" id="IPR022569">
    <property type="entry name" value="Fd_C"/>
</dbReference>
<dbReference type="InterPro" id="IPR054829">
    <property type="entry name" value="FdxA"/>
</dbReference>
<dbReference type="InterPro" id="IPR050294">
    <property type="entry name" value="RnfB_subfamily"/>
</dbReference>
<dbReference type="NCBIfam" id="NF045490">
    <property type="entry name" value="FdxA_Protbact"/>
    <property type="match status" value="1"/>
</dbReference>
<dbReference type="PANTHER" id="PTHR42859:SF2">
    <property type="entry name" value="FERREDOXIN"/>
    <property type="match status" value="1"/>
</dbReference>
<dbReference type="PANTHER" id="PTHR42859">
    <property type="entry name" value="OXIDOREDUCTASE"/>
    <property type="match status" value="1"/>
</dbReference>
<dbReference type="Pfam" id="PF11953">
    <property type="entry name" value="DUF3470"/>
    <property type="match status" value="1"/>
</dbReference>
<dbReference type="Pfam" id="PF00037">
    <property type="entry name" value="Fer4"/>
    <property type="match status" value="1"/>
</dbReference>
<dbReference type="Pfam" id="PF12800">
    <property type="entry name" value="Fer4_4"/>
    <property type="match status" value="1"/>
</dbReference>
<dbReference type="PRINTS" id="PR00354">
    <property type="entry name" value="7FE8SFRDOXIN"/>
</dbReference>
<dbReference type="SUPFAM" id="SSF54862">
    <property type="entry name" value="4Fe-4S ferredoxins"/>
    <property type="match status" value="1"/>
</dbReference>
<dbReference type="PROSITE" id="PS00198">
    <property type="entry name" value="4FE4S_FER_1"/>
    <property type="match status" value="1"/>
</dbReference>
<dbReference type="PROSITE" id="PS51379">
    <property type="entry name" value="4FE4S_FER_2"/>
    <property type="match status" value="2"/>
</dbReference>
<name>FER_RICFE</name>
<gene>
    <name type="primary">fdxA</name>
    <name type="ordered locus">RF_1315</name>
</gene>
<sequence>MTYVVNDECVKCKYTDCVDVCPVDCFYEGEFMLVINPDECIDCGVCVPDCPIDAIKPESPELIEWVERAKDFIENKGWKNITKKKPALPDADKFKDEKNKFNKYINNMN</sequence>
<proteinExistence type="inferred from homology"/>
<feature type="initiator methionine" description="Removed" evidence="1">
    <location>
        <position position="1"/>
    </location>
</feature>
<feature type="chain" id="PRO_0000280964" description="Ferredoxin">
    <location>
        <begin position="2"/>
        <end position="109"/>
    </location>
</feature>
<feature type="domain" description="4Fe-4S ferredoxin-type 1" evidence="2">
    <location>
        <begin position="2"/>
        <end position="30"/>
    </location>
</feature>
<feature type="domain" description="4Fe-4S ferredoxin-type 2" evidence="2">
    <location>
        <begin position="31"/>
        <end position="60"/>
    </location>
</feature>
<feature type="binding site" evidence="1">
    <location>
        <position position="9"/>
    </location>
    <ligand>
        <name>[3Fe-4S] cluster</name>
        <dbReference type="ChEBI" id="CHEBI:21137"/>
    </ligand>
</feature>
<feature type="binding site" evidence="1">
    <location>
        <position position="17"/>
    </location>
    <ligand>
        <name>[3Fe-4S] cluster</name>
        <dbReference type="ChEBI" id="CHEBI:21137"/>
    </ligand>
</feature>
<feature type="binding site" evidence="1">
    <location>
        <position position="21"/>
    </location>
    <ligand>
        <name>[4Fe-4S] cluster</name>
        <dbReference type="ChEBI" id="CHEBI:49883"/>
    </ligand>
</feature>
<feature type="binding site" evidence="1">
    <location>
        <position position="40"/>
    </location>
    <ligand>
        <name>[4Fe-4S] cluster</name>
        <dbReference type="ChEBI" id="CHEBI:49883"/>
    </ligand>
</feature>
<feature type="binding site" evidence="1">
    <location>
        <position position="43"/>
    </location>
    <ligand>
        <name>[4Fe-4S] cluster</name>
        <dbReference type="ChEBI" id="CHEBI:49883"/>
    </ligand>
</feature>
<feature type="binding site" evidence="1">
    <location>
        <position position="46"/>
    </location>
    <ligand>
        <name>[4Fe-4S] cluster</name>
        <dbReference type="ChEBI" id="CHEBI:49883"/>
    </ligand>
</feature>
<feature type="binding site" evidence="1">
    <location>
        <position position="50"/>
    </location>
    <ligand>
        <name>[3Fe-4S] cluster</name>
        <dbReference type="ChEBI" id="CHEBI:21137"/>
    </ligand>
</feature>
<reference key="1">
    <citation type="journal article" date="2005" name="PLoS Biol.">
        <title>The genome sequence of Rickettsia felis identifies the first putative conjugative plasmid in an obligate intracellular parasite.</title>
        <authorList>
            <person name="Ogata H."/>
            <person name="Renesto P."/>
            <person name="Audic S."/>
            <person name="Robert C."/>
            <person name="Blanc G."/>
            <person name="Fournier P.-E."/>
            <person name="Parinello H."/>
            <person name="Claverie J.-M."/>
            <person name="Raoult D."/>
        </authorList>
    </citation>
    <scope>NUCLEOTIDE SEQUENCE [LARGE SCALE GENOMIC DNA]</scope>
    <source>
        <strain>ATCC VR-1525 / URRWXCal2</strain>
    </source>
</reference>
<accession>Q4UJX3</accession>